<sequence length="451" mass="51381">MQSIEDIWQETLQIVKKNMSKPSYDTWMKSTTAHSLEGNTFIISAPNNFVRDWLEKSYTQFIANILQEITGRLFDVRFIDGEQEENFEYTVIKPNPALDEDGIEIGKHMLNPRYVFDTFVIGSGNRFAHAASLAVAEAPAKAYNPLFIYGGVGLGKTHLMHAVGHYVQQHKDNAKVMYLSSEKFTNEFISSIRDNKTEEFRTKYRNVDVLLIDDIQFLAGKEGTQEEFFHTFNTLYDEQKQIIISSDRPPKEIPTLEDRLRSRFEWGLITDITPPDLETRIAILRKKAKADGLDIPNEVMLYIANQIDSNIRELEGALIRVVAYSSLVNKDITAGLAAEALKDIIPSSKSQVITISGIQEAVGEYFHVRLEDFKAKKRTKSIAFPRQIAMYLSRELTDASLPKIGDEFGGRDHTTVIHAHEKISQLLKTDQVLKNDLAEIEKNLRKAQNMF</sequence>
<reference key="1">
    <citation type="journal article" date="2004" name="Nucleic Acids Res.">
        <title>Whole genome comparisons of serotype 4b and 1/2a strains of the food-borne pathogen Listeria monocytogenes reveal new insights into the core genome components of this species.</title>
        <authorList>
            <person name="Nelson K.E."/>
            <person name="Fouts D.E."/>
            <person name="Mongodin E.F."/>
            <person name="Ravel J."/>
            <person name="DeBoy R.T."/>
            <person name="Kolonay J.F."/>
            <person name="Rasko D.A."/>
            <person name="Angiuoli S.V."/>
            <person name="Gill S.R."/>
            <person name="Paulsen I.T."/>
            <person name="Peterson J.D."/>
            <person name="White O."/>
            <person name="Nelson W.C."/>
            <person name="Nierman W.C."/>
            <person name="Beanan M.J."/>
            <person name="Brinkac L.M."/>
            <person name="Daugherty S.C."/>
            <person name="Dodson R.J."/>
            <person name="Durkin A.S."/>
            <person name="Madupu R."/>
            <person name="Haft D.H."/>
            <person name="Selengut J."/>
            <person name="Van Aken S.E."/>
            <person name="Khouri H.M."/>
            <person name="Fedorova N."/>
            <person name="Forberger H.A."/>
            <person name="Tran B."/>
            <person name="Kathariou S."/>
            <person name="Wonderling L.D."/>
            <person name="Uhlich G.A."/>
            <person name="Bayles D.O."/>
            <person name="Luchansky J.B."/>
            <person name="Fraser C.M."/>
        </authorList>
    </citation>
    <scope>NUCLEOTIDE SEQUENCE [LARGE SCALE GENOMIC DNA]</scope>
    <source>
        <strain>F2365</strain>
    </source>
</reference>
<name>DNAA_LISMF</name>
<comment type="function">
    <text evidence="1">Plays an essential role in the initiation and regulation of chromosomal replication. ATP-DnaA binds to the origin of replication (oriC) to initiate formation of the DNA replication initiation complex once per cell cycle. Binds the DnaA box (a 9 base pair repeat at the origin) and separates the double-stranded (ds)DNA. Forms a right-handed helical filament on oriC DNA; dsDNA binds to the exterior of the filament while single-stranded (ss)DNA is stabiized in the filament's interior. The ATP-DnaA-oriC complex binds and stabilizes one strand of the AT-rich DNA unwinding element (DUE), permitting loading of DNA polymerase. After initiation quickly degrades to an ADP-DnaA complex that is not apt for DNA replication. Binds acidic phospholipids.</text>
</comment>
<comment type="subunit">
    <text evidence="1">Oligomerizes as a right-handed, spiral filament on DNA at oriC.</text>
</comment>
<comment type="subcellular location">
    <subcellularLocation>
        <location evidence="1">Cytoplasm</location>
    </subcellularLocation>
</comment>
<comment type="domain">
    <text evidence="1">Domain I is involved in oligomerization and binding regulators, domain II is flexibile and of varying length in different bacteria, domain III forms the AAA+ region, while domain IV binds dsDNA.</text>
</comment>
<comment type="similarity">
    <text evidence="1">Belongs to the DnaA family.</text>
</comment>
<feature type="chain" id="PRO_0000114202" description="Chromosomal replication initiator protein DnaA">
    <location>
        <begin position="1"/>
        <end position="451"/>
    </location>
</feature>
<feature type="region of interest" description="Domain I, interacts with DnaA modulators" evidence="1">
    <location>
        <begin position="1"/>
        <end position="72"/>
    </location>
</feature>
<feature type="region of interest" description="Domain II" evidence="1">
    <location>
        <begin position="72"/>
        <end position="108"/>
    </location>
</feature>
<feature type="region of interest" description="Domain III, AAA+ region" evidence="1">
    <location>
        <begin position="109"/>
        <end position="325"/>
    </location>
</feature>
<feature type="region of interest" description="Domain IV, binds dsDNA" evidence="1">
    <location>
        <begin position="326"/>
        <end position="451"/>
    </location>
</feature>
<feature type="binding site" evidence="1">
    <location>
        <position position="153"/>
    </location>
    <ligand>
        <name>ATP</name>
        <dbReference type="ChEBI" id="CHEBI:30616"/>
    </ligand>
</feature>
<feature type="binding site" evidence="1">
    <location>
        <position position="155"/>
    </location>
    <ligand>
        <name>ATP</name>
        <dbReference type="ChEBI" id="CHEBI:30616"/>
    </ligand>
</feature>
<feature type="binding site" evidence="1">
    <location>
        <position position="156"/>
    </location>
    <ligand>
        <name>ATP</name>
        <dbReference type="ChEBI" id="CHEBI:30616"/>
    </ligand>
</feature>
<feature type="binding site" evidence="1">
    <location>
        <position position="157"/>
    </location>
    <ligand>
        <name>ATP</name>
        <dbReference type="ChEBI" id="CHEBI:30616"/>
    </ligand>
</feature>
<keyword id="KW-0067">ATP-binding</keyword>
<keyword id="KW-0963">Cytoplasm</keyword>
<keyword id="KW-0235">DNA replication</keyword>
<keyword id="KW-0238">DNA-binding</keyword>
<keyword id="KW-0446">Lipid-binding</keyword>
<keyword id="KW-0547">Nucleotide-binding</keyword>
<proteinExistence type="inferred from homology"/>
<evidence type="ECO:0000255" key="1">
    <source>
        <dbReference type="HAMAP-Rule" id="MF_00377"/>
    </source>
</evidence>
<gene>
    <name evidence="1" type="primary">dnaA</name>
    <name type="ordered locus">LMOf2365_0001</name>
</gene>
<protein>
    <recommendedName>
        <fullName evidence="1">Chromosomal replication initiator protein DnaA</fullName>
    </recommendedName>
</protein>
<organism>
    <name type="scientific">Listeria monocytogenes serotype 4b (strain F2365)</name>
    <dbReference type="NCBI Taxonomy" id="265669"/>
    <lineage>
        <taxon>Bacteria</taxon>
        <taxon>Bacillati</taxon>
        <taxon>Bacillota</taxon>
        <taxon>Bacilli</taxon>
        <taxon>Bacillales</taxon>
        <taxon>Listeriaceae</taxon>
        <taxon>Listeria</taxon>
    </lineage>
</organism>
<accession>Q725H0</accession>
<dbReference type="EMBL" id="AE017262">
    <property type="protein sequence ID" value="AAT02791.1"/>
    <property type="molecule type" value="Genomic_DNA"/>
</dbReference>
<dbReference type="RefSeq" id="WP_003727573.1">
    <property type="nucleotide sequence ID" value="NC_002973.6"/>
</dbReference>
<dbReference type="SMR" id="Q725H0"/>
<dbReference type="GeneID" id="93237900"/>
<dbReference type="KEGG" id="lmf:LMOf2365_0001"/>
<dbReference type="HOGENOM" id="CLU_026910_3_1_9"/>
<dbReference type="GO" id="GO:0005737">
    <property type="term" value="C:cytoplasm"/>
    <property type="evidence" value="ECO:0007669"/>
    <property type="project" value="UniProtKB-SubCell"/>
</dbReference>
<dbReference type="GO" id="GO:0005886">
    <property type="term" value="C:plasma membrane"/>
    <property type="evidence" value="ECO:0007669"/>
    <property type="project" value="TreeGrafter"/>
</dbReference>
<dbReference type="GO" id="GO:0005524">
    <property type="term" value="F:ATP binding"/>
    <property type="evidence" value="ECO:0007669"/>
    <property type="project" value="UniProtKB-UniRule"/>
</dbReference>
<dbReference type="GO" id="GO:0016887">
    <property type="term" value="F:ATP hydrolysis activity"/>
    <property type="evidence" value="ECO:0007669"/>
    <property type="project" value="InterPro"/>
</dbReference>
<dbReference type="GO" id="GO:0003688">
    <property type="term" value="F:DNA replication origin binding"/>
    <property type="evidence" value="ECO:0007669"/>
    <property type="project" value="UniProtKB-UniRule"/>
</dbReference>
<dbReference type="GO" id="GO:0008289">
    <property type="term" value="F:lipid binding"/>
    <property type="evidence" value="ECO:0007669"/>
    <property type="project" value="UniProtKB-KW"/>
</dbReference>
<dbReference type="GO" id="GO:0006270">
    <property type="term" value="P:DNA replication initiation"/>
    <property type="evidence" value="ECO:0007669"/>
    <property type="project" value="UniProtKB-UniRule"/>
</dbReference>
<dbReference type="GO" id="GO:0006275">
    <property type="term" value="P:regulation of DNA replication"/>
    <property type="evidence" value="ECO:0007669"/>
    <property type="project" value="UniProtKB-UniRule"/>
</dbReference>
<dbReference type="CDD" id="cd00009">
    <property type="entry name" value="AAA"/>
    <property type="match status" value="1"/>
</dbReference>
<dbReference type="CDD" id="cd06571">
    <property type="entry name" value="Bac_DnaA_C"/>
    <property type="match status" value="1"/>
</dbReference>
<dbReference type="FunFam" id="1.10.1750.10:FF:000003">
    <property type="entry name" value="Chromosomal replication initiator protein DnaA"/>
    <property type="match status" value="1"/>
</dbReference>
<dbReference type="FunFam" id="1.10.8.60:FF:000003">
    <property type="entry name" value="Chromosomal replication initiator protein DnaA"/>
    <property type="match status" value="1"/>
</dbReference>
<dbReference type="FunFam" id="3.40.50.300:FF:000150">
    <property type="entry name" value="Chromosomal replication initiator protein DnaA"/>
    <property type="match status" value="1"/>
</dbReference>
<dbReference type="Gene3D" id="1.10.1750.10">
    <property type="match status" value="1"/>
</dbReference>
<dbReference type="Gene3D" id="1.10.8.60">
    <property type="match status" value="1"/>
</dbReference>
<dbReference type="Gene3D" id="3.30.300.180">
    <property type="match status" value="1"/>
</dbReference>
<dbReference type="Gene3D" id="3.40.50.300">
    <property type="entry name" value="P-loop containing nucleotide triphosphate hydrolases"/>
    <property type="match status" value="1"/>
</dbReference>
<dbReference type="HAMAP" id="MF_00377">
    <property type="entry name" value="DnaA_bact"/>
    <property type="match status" value="1"/>
</dbReference>
<dbReference type="InterPro" id="IPR003593">
    <property type="entry name" value="AAA+_ATPase"/>
</dbReference>
<dbReference type="InterPro" id="IPR001957">
    <property type="entry name" value="Chromosome_initiator_DnaA"/>
</dbReference>
<dbReference type="InterPro" id="IPR020591">
    <property type="entry name" value="Chromosome_initiator_DnaA-like"/>
</dbReference>
<dbReference type="InterPro" id="IPR018312">
    <property type="entry name" value="Chromosome_initiator_DnaA_CS"/>
</dbReference>
<dbReference type="InterPro" id="IPR013159">
    <property type="entry name" value="DnaA_C"/>
</dbReference>
<dbReference type="InterPro" id="IPR013317">
    <property type="entry name" value="DnaA_dom"/>
</dbReference>
<dbReference type="InterPro" id="IPR024633">
    <property type="entry name" value="DnaA_N_dom"/>
</dbReference>
<dbReference type="InterPro" id="IPR038454">
    <property type="entry name" value="DnaA_N_sf"/>
</dbReference>
<dbReference type="InterPro" id="IPR027417">
    <property type="entry name" value="P-loop_NTPase"/>
</dbReference>
<dbReference type="InterPro" id="IPR010921">
    <property type="entry name" value="Trp_repressor/repl_initiator"/>
</dbReference>
<dbReference type="NCBIfam" id="TIGR00362">
    <property type="entry name" value="DnaA"/>
    <property type="match status" value="1"/>
</dbReference>
<dbReference type="NCBIfam" id="NF010686">
    <property type="entry name" value="PRK14086.1"/>
    <property type="match status" value="1"/>
</dbReference>
<dbReference type="PANTHER" id="PTHR30050">
    <property type="entry name" value="CHROMOSOMAL REPLICATION INITIATOR PROTEIN DNAA"/>
    <property type="match status" value="1"/>
</dbReference>
<dbReference type="PANTHER" id="PTHR30050:SF2">
    <property type="entry name" value="CHROMOSOMAL REPLICATION INITIATOR PROTEIN DNAA"/>
    <property type="match status" value="1"/>
</dbReference>
<dbReference type="Pfam" id="PF00308">
    <property type="entry name" value="Bac_DnaA"/>
    <property type="match status" value="1"/>
</dbReference>
<dbReference type="Pfam" id="PF08299">
    <property type="entry name" value="Bac_DnaA_C"/>
    <property type="match status" value="1"/>
</dbReference>
<dbReference type="Pfam" id="PF11638">
    <property type="entry name" value="DnaA_N"/>
    <property type="match status" value="1"/>
</dbReference>
<dbReference type="PRINTS" id="PR00051">
    <property type="entry name" value="DNAA"/>
</dbReference>
<dbReference type="SMART" id="SM00382">
    <property type="entry name" value="AAA"/>
    <property type="match status" value="1"/>
</dbReference>
<dbReference type="SMART" id="SM00760">
    <property type="entry name" value="Bac_DnaA_C"/>
    <property type="match status" value="1"/>
</dbReference>
<dbReference type="SUPFAM" id="SSF52540">
    <property type="entry name" value="P-loop containing nucleoside triphosphate hydrolases"/>
    <property type="match status" value="1"/>
</dbReference>
<dbReference type="SUPFAM" id="SSF48295">
    <property type="entry name" value="TrpR-like"/>
    <property type="match status" value="1"/>
</dbReference>
<dbReference type="PROSITE" id="PS01008">
    <property type="entry name" value="DNAA"/>
    <property type="match status" value="1"/>
</dbReference>